<dbReference type="EMBL" id="AAFW02000135">
    <property type="protein sequence ID" value="EDN61212.1"/>
    <property type="molecule type" value="Genomic_DNA"/>
</dbReference>
<dbReference type="HOGENOM" id="CLU_045414_1_0_1"/>
<dbReference type="Proteomes" id="UP000007060">
    <property type="component" value="Unassembled WGS sequence"/>
</dbReference>
<dbReference type="GO" id="GO:0005634">
    <property type="term" value="C:nucleus"/>
    <property type="evidence" value="ECO:0007669"/>
    <property type="project" value="UniProtKB-SubCell"/>
</dbReference>
<dbReference type="GO" id="GO:0006325">
    <property type="term" value="P:chromatin organization"/>
    <property type="evidence" value="ECO:0007669"/>
    <property type="project" value="UniProtKB-KW"/>
</dbReference>
<dbReference type="Gene3D" id="2.130.10.10">
    <property type="entry name" value="YVTN repeat-like/Quinoprotein amine dehydrogenase"/>
    <property type="match status" value="1"/>
</dbReference>
<dbReference type="InterPro" id="IPR015943">
    <property type="entry name" value="WD40/YVTN_repeat-like_dom_sf"/>
</dbReference>
<dbReference type="InterPro" id="IPR036322">
    <property type="entry name" value="WD40_repeat_dom_sf"/>
</dbReference>
<dbReference type="PANTHER" id="PTHR19854:SF1">
    <property type="entry name" value="GUANINE NUCLEOTIDE-BINDING PROTEIN SUBUNIT BETA-LIKE PROTEIN 1"/>
    <property type="match status" value="1"/>
</dbReference>
<dbReference type="PANTHER" id="PTHR19854">
    <property type="entry name" value="TRANSDUCIN BETA-LIKE 3"/>
    <property type="match status" value="1"/>
</dbReference>
<dbReference type="SUPFAM" id="SSF50978">
    <property type="entry name" value="WD40 repeat-like"/>
    <property type="match status" value="1"/>
</dbReference>
<name>ASA1_YEAS7</name>
<protein>
    <recommendedName>
        <fullName>ASTRA-associated protein 1</fullName>
    </recommendedName>
</protein>
<sequence length="443" mass="50563">MRGFSNEIILKRTLTLSDFTLRYHKRGITALQVIKAPSVSNVPVLLSGDNYGYFVMWDLVTKRPITHIEIEGNSHIIAFWWVETTNVLYILSKDSMLRIFELDSSTQLSIDLVRKLSQANKTDHLQWTKIYEMPINTLNFANFIIEAEVKPTKDNKSYRLVCCHTDDSETIDIYQIIEDSTFKLKRPFNNINFPRFLKQQNFLGISKDSKFGIIMRFAKLNDVIFLGYENGFVVGFKITFDEGLQRDIAELVHVSNDHYPNPILDMCVSGDELYSCSTDDFITKYKIPVNLQLETKYLRDDALLIKCPSSLRVSEPSKVHLPLKNIGHIDKVKDDYLVVSSWSGMTIVYNMRTSEVEQTFVKSKNNLVVSDSSMGDLTNGSGSNTESSSKSHNYKVGAMTCLESFDVQSDGLRLGQLRRIKALAKCNWCLIGYEDGTIKLNKI</sequence>
<reference key="1">
    <citation type="journal article" date="2007" name="Proc. Natl. Acad. Sci. U.S.A.">
        <title>Genome sequencing and comparative analysis of Saccharomyces cerevisiae strain YJM789.</title>
        <authorList>
            <person name="Wei W."/>
            <person name="McCusker J.H."/>
            <person name="Hyman R.W."/>
            <person name="Jones T."/>
            <person name="Ning Y."/>
            <person name="Cao Z."/>
            <person name="Gu Z."/>
            <person name="Bruno D."/>
            <person name="Miranda M."/>
            <person name="Nguyen M."/>
            <person name="Wilhelmy J."/>
            <person name="Komp C."/>
            <person name="Tamse R."/>
            <person name="Wang X."/>
            <person name="Jia P."/>
            <person name="Luedi P."/>
            <person name="Oefner P.J."/>
            <person name="David L."/>
            <person name="Dietrich F.S."/>
            <person name="Li Y."/>
            <person name="Davis R.W."/>
            <person name="Steinmetz L.M."/>
        </authorList>
    </citation>
    <scope>NUCLEOTIDE SEQUENCE [LARGE SCALE GENOMIC DNA]</scope>
    <source>
        <strain>YJM789</strain>
    </source>
</reference>
<keyword id="KW-0156">Chromatin regulator</keyword>
<keyword id="KW-0539">Nucleus</keyword>
<keyword id="KW-0677">Repeat</keyword>
<keyword id="KW-0853">WD repeat</keyword>
<evidence type="ECO:0000250" key="1"/>
<evidence type="ECO:0000256" key="2">
    <source>
        <dbReference type="SAM" id="MobiDB-lite"/>
    </source>
</evidence>
<evidence type="ECO:0000305" key="3"/>
<organism>
    <name type="scientific">Saccharomyces cerevisiae (strain YJM789)</name>
    <name type="common">Baker's yeast</name>
    <dbReference type="NCBI Taxonomy" id="307796"/>
    <lineage>
        <taxon>Eukaryota</taxon>
        <taxon>Fungi</taxon>
        <taxon>Dikarya</taxon>
        <taxon>Ascomycota</taxon>
        <taxon>Saccharomycotina</taxon>
        <taxon>Saccharomycetes</taxon>
        <taxon>Saccharomycetales</taxon>
        <taxon>Saccharomycetaceae</taxon>
        <taxon>Saccharomyces</taxon>
    </lineage>
</organism>
<gene>
    <name type="primary">ASA1</name>
    <name type="ORF">SCY_5797</name>
</gene>
<comment type="function">
    <text evidence="1">Component of the ASTRA complex involved in chromatin remodeling.</text>
</comment>
<comment type="subunit">
    <text evidence="1">Component of the ASTRA chromatin remodeling machinery complex composed of at least RVB1, RVB2, TRA1, TEL2, TTI1 and TTI2.</text>
</comment>
<comment type="subcellular location">
    <subcellularLocation>
        <location evidence="1">Nucleus</location>
    </subcellularLocation>
</comment>
<comment type="similarity">
    <text evidence="3">Belongs to the WD repeat ASA1 family.</text>
</comment>
<accession>A6ZWX0</accession>
<feature type="chain" id="PRO_0000402227" description="ASTRA-associated protein 1">
    <location>
        <begin position="1"/>
        <end position="443"/>
    </location>
</feature>
<feature type="repeat" description="WD 1">
    <location>
        <begin position="23"/>
        <end position="67"/>
    </location>
</feature>
<feature type="repeat" description="WD 2">
    <location>
        <begin position="71"/>
        <end position="110"/>
    </location>
</feature>
<feature type="repeat" description="WD 3">
    <location>
        <begin position="258"/>
        <end position="295"/>
    </location>
</feature>
<feature type="repeat" description="WD 4">
    <location>
        <begin position="318"/>
        <end position="359"/>
    </location>
</feature>
<feature type="region of interest" description="Disordered" evidence="2">
    <location>
        <begin position="372"/>
        <end position="391"/>
    </location>
</feature>
<feature type="compositionally biased region" description="Low complexity" evidence="2">
    <location>
        <begin position="378"/>
        <end position="391"/>
    </location>
</feature>
<proteinExistence type="inferred from homology"/>